<keyword id="KW-0520">NAD</keyword>
<keyword id="KW-0560">Oxidoreductase</keyword>
<keyword id="KW-1185">Reference proteome</keyword>
<comment type="function">
    <text evidence="1">Involved in the oxidation of myo-inositol (MI) to 2-keto-myo-inositol (2KMI or 2-inosose).</text>
</comment>
<comment type="catalytic activity">
    <reaction evidence="1">
        <text>myo-inositol + NAD(+) = scyllo-inosose + NADH + H(+)</text>
        <dbReference type="Rhea" id="RHEA:16949"/>
        <dbReference type="ChEBI" id="CHEBI:15378"/>
        <dbReference type="ChEBI" id="CHEBI:17268"/>
        <dbReference type="ChEBI" id="CHEBI:17811"/>
        <dbReference type="ChEBI" id="CHEBI:57540"/>
        <dbReference type="ChEBI" id="CHEBI:57945"/>
        <dbReference type="EC" id="1.1.1.18"/>
    </reaction>
</comment>
<comment type="subunit">
    <text evidence="1">Homotetramer.</text>
</comment>
<comment type="similarity">
    <text evidence="1">Belongs to the Gfo/Idh/MocA family.</text>
</comment>
<comment type="sequence caution" evidence="2">
    <conflict type="erroneous initiation">
        <sequence resource="EMBL-CDS" id="CAM02258"/>
    </conflict>
</comment>
<proteinExistence type="inferred from homology"/>
<gene>
    <name evidence="1" type="primary">iolG1</name>
    <name type="ordered locus">SACE_2980</name>
</gene>
<accession>A4FDY3</accession>
<organism>
    <name type="scientific">Saccharopolyspora erythraea (strain ATCC 11635 / DSM 40517 / JCM 4748 / NBRC 13426 / NCIMB 8594 / NRRL 2338)</name>
    <dbReference type="NCBI Taxonomy" id="405948"/>
    <lineage>
        <taxon>Bacteria</taxon>
        <taxon>Bacillati</taxon>
        <taxon>Actinomycetota</taxon>
        <taxon>Actinomycetes</taxon>
        <taxon>Pseudonocardiales</taxon>
        <taxon>Pseudonocardiaceae</taxon>
        <taxon>Saccharopolyspora</taxon>
    </lineage>
</organism>
<dbReference type="EC" id="1.1.1.18" evidence="1"/>
<dbReference type="EMBL" id="AM420293">
    <property type="protein sequence ID" value="CAM02258.1"/>
    <property type="status" value="ALT_INIT"/>
    <property type="molecule type" value="Genomic_DNA"/>
</dbReference>
<dbReference type="RefSeq" id="WP_029621968.1">
    <property type="nucleotide sequence ID" value="NC_009142.1"/>
</dbReference>
<dbReference type="SMR" id="A4FDY3"/>
<dbReference type="STRING" id="405948.SACE_2980"/>
<dbReference type="KEGG" id="sen:SACE_2980"/>
<dbReference type="eggNOG" id="COG0673">
    <property type="taxonomic scope" value="Bacteria"/>
</dbReference>
<dbReference type="HOGENOM" id="CLU_023194_0_1_11"/>
<dbReference type="OrthoDB" id="9815825at2"/>
<dbReference type="Proteomes" id="UP000006728">
    <property type="component" value="Chromosome"/>
</dbReference>
<dbReference type="GO" id="GO:0050112">
    <property type="term" value="F:inositol 2-dehydrogenase (NAD+) activity"/>
    <property type="evidence" value="ECO:0007669"/>
    <property type="project" value="UniProtKB-UniRule"/>
</dbReference>
<dbReference type="GO" id="GO:0000166">
    <property type="term" value="F:nucleotide binding"/>
    <property type="evidence" value="ECO:0007669"/>
    <property type="project" value="InterPro"/>
</dbReference>
<dbReference type="GO" id="GO:0019310">
    <property type="term" value="P:inositol catabolic process"/>
    <property type="evidence" value="ECO:0007669"/>
    <property type="project" value="UniProtKB-UniRule"/>
</dbReference>
<dbReference type="Gene3D" id="3.30.360.10">
    <property type="entry name" value="Dihydrodipicolinate Reductase, domain 2"/>
    <property type="match status" value="1"/>
</dbReference>
<dbReference type="Gene3D" id="3.40.50.720">
    <property type="entry name" value="NAD(P)-binding Rossmann-like Domain"/>
    <property type="match status" value="1"/>
</dbReference>
<dbReference type="HAMAP" id="MF_01671">
    <property type="entry name" value="IolG"/>
    <property type="match status" value="1"/>
</dbReference>
<dbReference type="InterPro" id="IPR050424">
    <property type="entry name" value="Gfo-Idh-MocA_inositol_DH"/>
</dbReference>
<dbReference type="InterPro" id="IPR004104">
    <property type="entry name" value="Gfo/Idh/MocA-like_OxRdtase_C"/>
</dbReference>
<dbReference type="InterPro" id="IPR000683">
    <property type="entry name" value="Gfo/Idh/MocA-like_OxRdtase_N"/>
</dbReference>
<dbReference type="InterPro" id="IPR023794">
    <property type="entry name" value="MI/DCI_dehydrogenase"/>
</dbReference>
<dbReference type="InterPro" id="IPR036291">
    <property type="entry name" value="NAD(P)-bd_dom_sf"/>
</dbReference>
<dbReference type="PANTHER" id="PTHR43593">
    <property type="match status" value="1"/>
</dbReference>
<dbReference type="PANTHER" id="PTHR43593:SF1">
    <property type="entry name" value="INOSITOL 2-DEHYDROGENASE"/>
    <property type="match status" value="1"/>
</dbReference>
<dbReference type="Pfam" id="PF01408">
    <property type="entry name" value="GFO_IDH_MocA"/>
    <property type="match status" value="1"/>
</dbReference>
<dbReference type="Pfam" id="PF02894">
    <property type="entry name" value="GFO_IDH_MocA_C"/>
    <property type="match status" value="1"/>
</dbReference>
<dbReference type="SUPFAM" id="SSF55347">
    <property type="entry name" value="Glyceraldehyde-3-phosphate dehydrogenase-like, C-terminal domain"/>
    <property type="match status" value="1"/>
</dbReference>
<dbReference type="SUPFAM" id="SSF51735">
    <property type="entry name" value="NAD(P)-binding Rossmann-fold domains"/>
    <property type="match status" value="1"/>
</dbReference>
<feature type="chain" id="PRO_0000352590" description="Inositol 2-dehydrogenase 1">
    <location>
        <begin position="1"/>
        <end position="337"/>
    </location>
</feature>
<evidence type="ECO:0000255" key="1">
    <source>
        <dbReference type="HAMAP-Rule" id="MF_01671"/>
    </source>
</evidence>
<evidence type="ECO:0000305" key="2"/>
<reference key="1">
    <citation type="journal article" date="2007" name="Nat. Biotechnol.">
        <title>Complete genome sequence of the erythromycin-producing bacterium Saccharopolyspora erythraea NRRL23338.</title>
        <authorList>
            <person name="Oliynyk M."/>
            <person name="Samborskyy M."/>
            <person name="Lester J.B."/>
            <person name="Mironenko T."/>
            <person name="Scott N."/>
            <person name="Dickens S."/>
            <person name="Haydock S.F."/>
            <person name="Leadlay P.F."/>
        </authorList>
    </citation>
    <scope>NUCLEOTIDE SEQUENCE [LARGE SCALE GENOMIC DNA]</scope>
    <source>
        <strain>ATCC 11635 / DSM 40517 / JCM 4748 / NBRC 13426 / NCIMB 8594 / NRRL 2338</strain>
    </source>
</reference>
<protein>
    <recommendedName>
        <fullName evidence="1">Inositol 2-dehydrogenase 1</fullName>
        <ecNumber evidence="1">1.1.1.18</ecNumber>
    </recommendedName>
    <alternativeName>
        <fullName evidence="1">Myo-inositol 2-dehydrogenase 1</fullName>
        <shortName evidence="1">MI 2-dehydrogenase 1</shortName>
    </alternativeName>
</protein>
<name>IOLG1_SACEN</name>
<sequence>MTVRVGVVGTGVMGADHVRTLTGGVAGARVVAVSDADQGRGRAVAAEAGDEVVFHADPVDLIGDAGVDAVVVASPDHTHEALATACVEAGKPVLCEKPLAATAADCLRIVAHEVAKGRRLVQAGYMRRFDPSYVDMKRALDAGSIGDPVLVHCVHRNARALHFFTPEMPFTSAAVHEFDVVRWLLSSEIVRVTVHRTRSSSRAAARLADPRLLVLETAAGVTVDVEVFVNAQYGYDVRCELVGELGTVSLALPSTTVVRAGGAEGVAVHADFRTRFAEAYRLQLQAWVDAAARGEACGPSAWDGYAATAVAEACLRAQEDGTPVEVELADKPALYGT</sequence>